<gene>
    <name type="primary">Tle3</name>
    <name type="synonym">Esp3</name>
</gene>
<keyword id="KW-0007">Acetylation</keyword>
<keyword id="KW-1017">Isopeptide bond</keyword>
<keyword id="KW-0539">Nucleus</keyword>
<keyword id="KW-0597">Phosphoprotein</keyword>
<keyword id="KW-1185">Reference proteome</keyword>
<keyword id="KW-0677">Repeat</keyword>
<keyword id="KW-0678">Repressor</keyword>
<keyword id="KW-0804">Transcription</keyword>
<keyword id="KW-0805">Transcription regulation</keyword>
<keyword id="KW-0832">Ubl conjugation</keyword>
<keyword id="KW-0853">WD repeat</keyword>
<keyword id="KW-0879">Wnt signaling pathway</keyword>
<comment type="function">
    <text evidence="1 2">Transcriptional corepressor that binds to a number of transcription factors. Inhibits the transcriptional activation mediated by CTNNB1 and TCF family members in Wnt signaling (By similarity). The effects of full-length TLE family members may be modulated by association with dominant-negative AES (By similarity).</text>
</comment>
<comment type="subunit">
    <text evidence="2 4">Homotetramer and heterooligomer with other family members (By similarity). Binds LEF1, TCF7 and TCF7L1 (By similarity). Binds FOXA2. Interacts with TCF7L2/TCF4. Interacts with TBX18 (via engrailed homology 1 repressor motif), leading to decreased of TBX18 transcriptional activity (By similarity).</text>
</comment>
<comment type="subcellular location">
    <subcellularLocation>
        <location evidence="2">Nucleus</location>
    </subcellularLocation>
</comment>
<comment type="tissue specificity">
    <text>Highly expressed in adrenal gland, small intestine, kidney, lung, ovary and thyroid. Detected at lower levels in pituitary, hippocampus, cortex, cerebellum and testis.</text>
</comment>
<comment type="induction">
    <text>By kainic acid in the dentate gyrus.</text>
</comment>
<comment type="domain">
    <text evidence="8">WD repeat Groucho/TLE family members are characterized by 5 regions, a glutamine-rich Q domain, a glycine/proline-rich GP domain, a central CcN domain, containing a nuclear localization signal, and a serine/proline-rich SP domain. The most highly conserved are the N-terminal Q domain and the C-terminal WD-repeat domain.</text>
</comment>
<comment type="PTM">
    <text evidence="2">Ubiquitinated by XIAP/BIRC4. This ubiquitination does not affect its stability, nuclear localization, or capacity to tetramerize but inhibits its interaction with TCF7L2/TCF4. Ubiquitinated at Lys-712 by UBR5 in response to Wnt signaling, leading to substrate recognition by the segregase p97/VCP and degradation by the proteasome.</text>
</comment>
<comment type="similarity">
    <text evidence="7">Belongs to the WD repeat Groucho/TLE family.</text>
</comment>
<accession>Q9JIT3</accession>
<reference key="1">
    <citation type="journal article" date="2000" name="J. Neurochem.">
        <title>rTLE3, a newly identified transducin-like enhancer of split, is induced by depolarization in brain.</title>
        <authorList>
            <person name="Feldman J.D."/>
            <person name="Vician L."/>
            <person name="Crispino M."/>
            <person name="Hoe W."/>
            <person name="Baudry M."/>
            <person name="Herschman H.R."/>
        </authorList>
    </citation>
    <scope>NUCLEOTIDE SEQUENCE [MRNA]</scope>
    <source>
        <tissue>Brain cortex</tissue>
    </source>
</reference>
<reference key="2">
    <citation type="journal article" date="2008" name="Genome Biol.">
        <title>The Groucho/TLE/Grg family of transcriptional co-repressors.</title>
        <authorList>
            <person name="Jennings B.H."/>
            <person name="Ish-Horowicz D."/>
        </authorList>
    </citation>
    <scope>REVIEW</scope>
</reference>
<reference key="3">
    <citation type="journal article" date="2012" name="Nat. Commun.">
        <title>Quantitative maps of protein phosphorylation sites across 14 different rat organs and tissues.</title>
        <authorList>
            <person name="Lundby A."/>
            <person name="Secher A."/>
            <person name="Lage K."/>
            <person name="Nordsborg N.B."/>
            <person name="Dmytriyev A."/>
            <person name="Lundby C."/>
            <person name="Olsen J.V."/>
        </authorList>
    </citation>
    <scope>PHOSPHORYLATION [LARGE SCALE ANALYSIS] AT SER-203; SER-217; SER-245; THR-259; SER-263 AND SER-267</scope>
    <scope>IDENTIFICATION BY MASS SPECTROMETRY [LARGE SCALE ANALYSIS]</scope>
</reference>
<protein>
    <recommendedName>
        <fullName>Transducin-like enhancer protein 3</fullName>
        <shortName>rTLE3</shortName>
    </recommendedName>
</protein>
<proteinExistence type="evidence at protein level"/>
<organism>
    <name type="scientific">Rattus norvegicus</name>
    <name type="common">Rat</name>
    <dbReference type="NCBI Taxonomy" id="10116"/>
    <lineage>
        <taxon>Eukaryota</taxon>
        <taxon>Metazoa</taxon>
        <taxon>Chordata</taxon>
        <taxon>Craniata</taxon>
        <taxon>Vertebrata</taxon>
        <taxon>Euteleostomi</taxon>
        <taxon>Mammalia</taxon>
        <taxon>Eutheria</taxon>
        <taxon>Euarchontoglires</taxon>
        <taxon>Glires</taxon>
        <taxon>Rodentia</taxon>
        <taxon>Myomorpha</taxon>
        <taxon>Muroidea</taxon>
        <taxon>Muridae</taxon>
        <taxon>Murinae</taxon>
        <taxon>Rattus</taxon>
    </lineage>
</organism>
<feature type="chain" id="PRO_0000051282" description="Transducin-like enhancer protein 3">
    <location>
        <begin position="1"/>
        <end position="764"/>
    </location>
</feature>
<feature type="repeat" description="WD 1">
    <location>
        <begin position="476"/>
        <end position="514"/>
    </location>
</feature>
<feature type="repeat" description="WD 2">
    <location>
        <begin position="522"/>
        <end position="561"/>
    </location>
</feature>
<feature type="repeat" description="WD 3">
    <location>
        <begin position="566"/>
        <end position="605"/>
    </location>
</feature>
<feature type="repeat" description="WD 4">
    <location>
        <begin position="608"/>
        <end position="647"/>
    </location>
</feature>
<feature type="repeat" description="WD 5">
    <location>
        <begin position="649"/>
        <end position="688"/>
    </location>
</feature>
<feature type="repeat" description="WD 6">
    <location>
        <begin position="690"/>
        <end position="729"/>
    </location>
</feature>
<feature type="repeat" description="WD 7">
    <location>
        <begin position="731"/>
        <end position="763"/>
    </location>
</feature>
<feature type="region of interest" description="Q domain" evidence="1">
    <location>
        <begin position="1"/>
        <end position="131"/>
    </location>
</feature>
<feature type="region of interest" description="Disordered" evidence="6">
    <location>
        <begin position="130"/>
        <end position="163"/>
    </location>
</feature>
<feature type="region of interest" description="GP domain" evidence="1">
    <location>
        <begin position="132"/>
        <end position="199"/>
    </location>
</feature>
<feature type="region of interest" description="Disordered" evidence="6">
    <location>
        <begin position="184"/>
        <end position="349"/>
    </location>
</feature>
<feature type="region of interest" description="CcN domain" evidence="1">
    <location>
        <begin position="200"/>
        <end position="268"/>
    </location>
</feature>
<feature type="region of interest" description="SP domain" evidence="1">
    <location>
        <begin position="269"/>
        <end position="444"/>
    </location>
</feature>
<feature type="short sequence motif" description="Nuclear localization signal" evidence="5">
    <location>
        <begin position="225"/>
        <end position="228"/>
    </location>
</feature>
<feature type="compositionally biased region" description="Basic and acidic residues" evidence="6">
    <location>
        <begin position="184"/>
        <end position="196"/>
    </location>
</feature>
<feature type="compositionally biased region" description="Low complexity" evidence="6">
    <location>
        <begin position="197"/>
        <end position="207"/>
    </location>
</feature>
<feature type="compositionally biased region" description="Basic and acidic residues" evidence="6">
    <location>
        <begin position="209"/>
        <end position="247"/>
    </location>
</feature>
<feature type="compositionally biased region" description="Basic and acidic residues" evidence="6">
    <location>
        <begin position="272"/>
        <end position="283"/>
    </location>
</feature>
<feature type="compositionally biased region" description="Low complexity" evidence="6">
    <location>
        <begin position="284"/>
        <end position="299"/>
    </location>
</feature>
<feature type="compositionally biased region" description="Basic and acidic residues" evidence="6">
    <location>
        <begin position="300"/>
        <end position="309"/>
    </location>
</feature>
<feature type="compositionally biased region" description="Polar residues" evidence="6">
    <location>
        <begin position="310"/>
        <end position="322"/>
    </location>
</feature>
<feature type="modified residue" description="Phosphoserine" evidence="9">
    <location>
        <position position="203"/>
    </location>
</feature>
<feature type="modified residue" description="Phosphoserine" evidence="2">
    <location>
        <position position="207"/>
    </location>
</feature>
<feature type="modified residue" description="Phosphoserine" evidence="2">
    <location>
        <position position="211"/>
    </location>
</feature>
<feature type="modified residue" description="Phosphoserine" evidence="9">
    <location>
        <position position="217"/>
    </location>
</feature>
<feature type="modified residue" description="N6-acetyllysine" evidence="3">
    <location>
        <position position="232"/>
    </location>
</feature>
<feature type="modified residue" description="Phosphoserine" evidence="2">
    <location>
        <position position="240"/>
    </location>
</feature>
<feature type="modified residue" description="Phosphoserine" evidence="9">
    <location>
        <position position="245"/>
    </location>
</feature>
<feature type="modified residue" description="Phosphothreonine" evidence="9">
    <location>
        <position position="259"/>
    </location>
</feature>
<feature type="modified residue" description="Phosphoserine" evidence="9">
    <location>
        <position position="263"/>
    </location>
</feature>
<feature type="modified residue" description="Phosphoserine" evidence="9">
    <location>
        <position position="267"/>
    </location>
</feature>
<feature type="modified residue" description="N6-acetyllysine" evidence="3">
    <location>
        <position position="275"/>
    </location>
</feature>
<feature type="modified residue" description="Phosphoserine" evidence="2">
    <location>
        <position position="286"/>
    </location>
</feature>
<feature type="modified residue" description="Phosphothreonine" evidence="2">
    <location>
        <position position="312"/>
    </location>
</feature>
<feature type="modified residue" description="Phosphoserine" evidence="2">
    <location>
        <position position="317"/>
    </location>
</feature>
<feature type="modified residue" description="Phosphothreonine" evidence="2">
    <location>
        <position position="319"/>
    </location>
</feature>
<feature type="modified residue" description="Phosphothreonine" evidence="2">
    <location>
        <position position="321"/>
    </location>
</feature>
<feature type="modified residue" description="Phosphothreonine" evidence="2">
    <location>
        <position position="328"/>
    </location>
</feature>
<feature type="modified residue" description="Phosphothreonine" evidence="2">
    <location>
        <position position="334"/>
    </location>
</feature>
<feature type="modified residue" description="Phosphoserine" evidence="2">
    <location>
        <position position="410"/>
    </location>
</feature>
<feature type="cross-link" description="Glycyl lysine isopeptide (Lys-Gly) (interchain with G-Cter in ubiquitin)" evidence="2">
    <location>
        <position position="712"/>
    </location>
</feature>
<evidence type="ECO:0000250" key="1">
    <source>
        <dbReference type="UniProtKB" id="Q04724"/>
    </source>
</evidence>
<evidence type="ECO:0000250" key="2">
    <source>
        <dbReference type="UniProtKB" id="Q04726"/>
    </source>
</evidence>
<evidence type="ECO:0000250" key="3">
    <source>
        <dbReference type="UniProtKB" id="Q04727"/>
    </source>
</evidence>
<evidence type="ECO:0000250" key="4">
    <source>
        <dbReference type="UniProtKB" id="Q08122"/>
    </source>
</evidence>
<evidence type="ECO:0000255" key="5"/>
<evidence type="ECO:0000256" key="6">
    <source>
        <dbReference type="SAM" id="MobiDB-lite"/>
    </source>
</evidence>
<evidence type="ECO:0000305" key="7"/>
<evidence type="ECO:0000305" key="8">
    <source>
    </source>
</evidence>
<evidence type="ECO:0007744" key="9">
    <source>
    </source>
</evidence>
<name>TLE3_RAT</name>
<dbReference type="EMBL" id="AF186092">
    <property type="protein sequence ID" value="AAF75590.1"/>
    <property type="molecule type" value="mRNA"/>
</dbReference>
<dbReference type="RefSeq" id="NP_445852.1">
    <property type="nucleotide sequence ID" value="NM_053400.3"/>
</dbReference>
<dbReference type="SMR" id="Q9JIT3"/>
<dbReference type="FunCoup" id="Q9JIT3">
    <property type="interactions" value="2521"/>
</dbReference>
<dbReference type="STRING" id="10116.ENSRNOP00000018467"/>
<dbReference type="GlyGen" id="Q9JIT3">
    <property type="glycosylation" value="2 sites"/>
</dbReference>
<dbReference type="iPTMnet" id="Q9JIT3"/>
<dbReference type="PhosphoSitePlus" id="Q9JIT3"/>
<dbReference type="PaxDb" id="10116-ENSRNOP00000018467"/>
<dbReference type="GeneID" id="84424"/>
<dbReference type="KEGG" id="rno:84424"/>
<dbReference type="UCSC" id="RGD:620292">
    <property type="organism name" value="rat"/>
</dbReference>
<dbReference type="AGR" id="RGD:620292"/>
<dbReference type="CTD" id="7090"/>
<dbReference type="RGD" id="620292">
    <property type="gene designation" value="Tle3"/>
</dbReference>
<dbReference type="VEuPathDB" id="HostDB:ENSRNOG00000013013"/>
<dbReference type="eggNOG" id="KOG0639">
    <property type="taxonomic scope" value="Eukaryota"/>
</dbReference>
<dbReference type="HOGENOM" id="CLU_007612_3_0_1"/>
<dbReference type="InParanoid" id="Q9JIT3"/>
<dbReference type="OrthoDB" id="2624652at2759"/>
<dbReference type="PhylomeDB" id="Q9JIT3"/>
<dbReference type="Reactome" id="R-RNO-201722">
    <property type="pathway name" value="Formation of the beta-catenin:TCF transactivating complex"/>
</dbReference>
<dbReference type="Reactome" id="R-RNO-3769402">
    <property type="pathway name" value="Deactivation of the beta-catenin transactivating complex"/>
</dbReference>
<dbReference type="Reactome" id="R-RNO-4641265">
    <property type="pathway name" value="Repression of WNT target genes"/>
</dbReference>
<dbReference type="Reactome" id="R-RNO-9018519">
    <property type="pathway name" value="Estrogen-dependent gene expression"/>
</dbReference>
<dbReference type="PRO" id="PR:Q9JIT3"/>
<dbReference type="Proteomes" id="UP000002494">
    <property type="component" value="Chromosome 8"/>
</dbReference>
<dbReference type="Bgee" id="ENSRNOG00000013013">
    <property type="expression patterns" value="Expressed in thymus and 19 other cell types or tissues"/>
</dbReference>
<dbReference type="GO" id="GO:1990907">
    <property type="term" value="C:beta-catenin-TCF complex"/>
    <property type="evidence" value="ECO:0000266"/>
    <property type="project" value="RGD"/>
</dbReference>
<dbReference type="GO" id="GO:0005634">
    <property type="term" value="C:nucleus"/>
    <property type="evidence" value="ECO:0000314"/>
    <property type="project" value="BHF-UCL"/>
</dbReference>
<dbReference type="GO" id="GO:0005667">
    <property type="term" value="C:transcription regulator complex"/>
    <property type="evidence" value="ECO:0000318"/>
    <property type="project" value="GO_Central"/>
</dbReference>
<dbReference type="GO" id="GO:0003714">
    <property type="term" value="F:transcription corepressor activity"/>
    <property type="evidence" value="ECO:0000318"/>
    <property type="project" value="GO_Central"/>
</dbReference>
<dbReference type="GO" id="GO:0090090">
    <property type="term" value="P:negative regulation of canonical Wnt signaling pathway"/>
    <property type="evidence" value="ECO:0000318"/>
    <property type="project" value="GO_Central"/>
</dbReference>
<dbReference type="GO" id="GO:0120163">
    <property type="term" value="P:negative regulation of cold-induced thermogenesis"/>
    <property type="evidence" value="ECO:0000250"/>
    <property type="project" value="YuBioLab"/>
</dbReference>
<dbReference type="GO" id="GO:0006355">
    <property type="term" value="P:regulation of DNA-templated transcription"/>
    <property type="evidence" value="ECO:0000314"/>
    <property type="project" value="RGD"/>
</dbReference>
<dbReference type="GO" id="GO:0016055">
    <property type="term" value="P:Wnt signaling pathway"/>
    <property type="evidence" value="ECO:0007669"/>
    <property type="project" value="UniProtKB-KW"/>
</dbReference>
<dbReference type="CDD" id="cd00200">
    <property type="entry name" value="WD40"/>
    <property type="match status" value="1"/>
</dbReference>
<dbReference type="FunFam" id="2.130.10.10:FF:000001">
    <property type="entry name" value="transducin-like enhancer protein 3 isoform X1"/>
    <property type="match status" value="1"/>
</dbReference>
<dbReference type="Gene3D" id="2.130.10.10">
    <property type="entry name" value="YVTN repeat-like/Quinoprotein amine dehydrogenase"/>
    <property type="match status" value="1"/>
</dbReference>
<dbReference type="InterPro" id="IPR005617">
    <property type="entry name" value="Groucho/TLE_N"/>
</dbReference>
<dbReference type="InterPro" id="IPR009146">
    <property type="entry name" value="Groucho_enhance"/>
</dbReference>
<dbReference type="InterPro" id="IPR015943">
    <property type="entry name" value="WD40/YVTN_repeat-like_dom_sf"/>
</dbReference>
<dbReference type="InterPro" id="IPR019775">
    <property type="entry name" value="WD40_repeat_CS"/>
</dbReference>
<dbReference type="InterPro" id="IPR036322">
    <property type="entry name" value="WD40_repeat_dom_sf"/>
</dbReference>
<dbReference type="InterPro" id="IPR001680">
    <property type="entry name" value="WD40_rpt"/>
</dbReference>
<dbReference type="PANTHER" id="PTHR10814">
    <property type="entry name" value="TRANSDUCIN-LIKE ENHANCER PROTEIN"/>
    <property type="match status" value="1"/>
</dbReference>
<dbReference type="PANTHER" id="PTHR10814:SF24">
    <property type="entry name" value="TRANSDUCIN-LIKE ENHANCER PROTEIN 3"/>
    <property type="match status" value="1"/>
</dbReference>
<dbReference type="Pfam" id="PF03920">
    <property type="entry name" value="TLE_N"/>
    <property type="match status" value="1"/>
</dbReference>
<dbReference type="Pfam" id="PF00400">
    <property type="entry name" value="WD40"/>
    <property type="match status" value="6"/>
</dbReference>
<dbReference type="PRINTS" id="PR01850">
    <property type="entry name" value="GROUCHOFAMLY"/>
</dbReference>
<dbReference type="SMART" id="SM00320">
    <property type="entry name" value="WD40"/>
    <property type="match status" value="7"/>
</dbReference>
<dbReference type="SUPFAM" id="SSF50978">
    <property type="entry name" value="WD40 repeat-like"/>
    <property type="match status" value="1"/>
</dbReference>
<dbReference type="PROSITE" id="PS00678">
    <property type="entry name" value="WD_REPEATS_1"/>
    <property type="match status" value="2"/>
</dbReference>
<dbReference type="PROSITE" id="PS50082">
    <property type="entry name" value="WD_REPEATS_2"/>
    <property type="match status" value="2"/>
</dbReference>
<dbReference type="PROSITE" id="PS50294">
    <property type="entry name" value="WD_REPEATS_REGION"/>
    <property type="match status" value="2"/>
</dbReference>
<sequence length="764" mass="82644">MYPQGRHPAPHQPGQPGFKFTVAESCDRIKDEFQFLQAQYHSLKVEYDKLANEKTEMQRHYVMYYEMSYGLNIEMHKQTEIAKRLNTILAQIMPFLSQEHQQQVAQAVERAKQVTMTELNAIIGQQQLQAQHLSHATHGPPVQLPPHPSGLQPPGIPPVTGSSSGLLALGALGSQAHLAVKDEKNHHELDHRERESSTNNSVSPSESLRASEKHRGSADYSMEAKKRKAEEKDSLSRYDSDGDKSDDLVVDVSNEDPATPRVSPAHSPPENGLDKARGLKKDAPTSPASVASSSSTPSSKTKDLGHNDKSSTPGLKSNTPTPRNDAPTPGTSTTPGLRSMPGKPPGMDPIASALRTPISLTSSYAAPFAMMSHHEMNGSLTSPSAYAGLHNIPSQMSAAAAAAAAAYGRSPMVGFDPHPPMRATGLPSSLASIPGGKPAYSFHVSADGQMQPVPFPHDALAGPGIPRHARQINTLSHGEVVCAVTISNPTRHVYTGGKGCVKIWDISQPGSKSPISQLDCLNRDNYIRSCKLLPDGRTLIVGGEASTLTIWDLASPTPRIKAELTSSAPACYALAISPDAKVCFSCCSDGNIAVWDLHNQTLVRQFQGHTDGASCIDISHDGTKLWTGGLDNTVRSWDLREGRQLQQHDFTSQIFSLGYCPTGEWLAVGMESSNVEVLHHTKPDKYQLHLHESCVLSLKFAYCGKWFVSTGKDNLLNAWRTPYGASIFQSKESSSVLSCDISADDKYIVTGSGDKKATVYEVIY</sequence>